<proteinExistence type="inferred from homology"/>
<dbReference type="EC" id="3.1.1.-" evidence="1"/>
<dbReference type="EMBL" id="AE017220">
    <property type="protein sequence ID" value="AAX68162.1"/>
    <property type="status" value="ALT_INIT"/>
    <property type="molecule type" value="Genomic_DNA"/>
</dbReference>
<dbReference type="RefSeq" id="WP_001541373.1">
    <property type="nucleotide sequence ID" value="NC_006905.1"/>
</dbReference>
<dbReference type="SMR" id="Q57GK0"/>
<dbReference type="KEGG" id="sec:SCH_4256"/>
<dbReference type="HOGENOM" id="CLU_074775_0_0_6"/>
<dbReference type="UniPathway" id="UPA00263">
    <property type="reaction ID" value="UER00377"/>
</dbReference>
<dbReference type="Proteomes" id="UP000000538">
    <property type="component" value="Chromosome"/>
</dbReference>
<dbReference type="GO" id="GO:0005737">
    <property type="term" value="C:cytoplasm"/>
    <property type="evidence" value="ECO:0007669"/>
    <property type="project" value="UniProtKB-SubCell"/>
</dbReference>
<dbReference type="GO" id="GO:0035460">
    <property type="term" value="F:L-ascorbate 6-phosphate lactonase activity"/>
    <property type="evidence" value="ECO:0007669"/>
    <property type="project" value="InterPro"/>
</dbReference>
<dbReference type="GO" id="GO:0030145">
    <property type="term" value="F:manganese ion binding"/>
    <property type="evidence" value="ECO:0007669"/>
    <property type="project" value="InterPro"/>
</dbReference>
<dbReference type="GO" id="GO:0019854">
    <property type="term" value="P:L-ascorbic acid catabolic process"/>
    <property type="evidence" value="ECO:0007669"/>
    <property type="project" value="UniProtKB-UniRule"/>
</dbReference>
<dbReference type="CDD" id="cd16284">
    <property type="entry name" value="UlaG-like_MBL-fold"/>
    <property type="match status" value="1"/>
</dbReference>
<dbReference type="FunFam" id="3.60.15.10:FF:000004">
    <property type="entry name" value="Probable L-ascorbate-6-phosphate lactonase UlaG"/>
    <property type="match status" value="1"/>
</dbReference>
<dbReference type="Gene3D" id="3.60.15.10">
    <property type="entry name" value="Ribonuclease Z/Hydroxyacylglutathione hydrolase-like"/>
    <property type="match status" value="1"/>
</dbReference>
<dbReference type="HAMAP" id="MF_01266">
    <property type="entry name" value="UlaG"/>
    <property type="match status" value="1"/>
</dbReference>
<dbReference type="InterPro" id="IPR023951">
    <property type="entry name" value="L-ascorbate_6P_UlaG"/>
</dbReference>
<dbReference type="InterPro" id="IPR001279">
    <property type="entry name" value="Metallo-B-lactamas"/>
</dbReference>
<dbReference type="InterPro" id="IPR036866">
    <property type="entry name" value="RibonucZ/Hydroxyglut_hydro"/>
</dbReference>
<dbReference type="InterPro" id="IPR048021">
    <property type="entry name" value="UlaG-like_MBL-fold"/>
</dbReference>
<dbReference type="InterPro" id="IPR050114">
    <property type="entry name" value="UPF0173_UPF0282_UlaG_hydrolase"/>
</dbReference>
<dbReference type="NCBIfam" id="NF008688">
    <property type="entry name" value="PRK11709.1"/>
    <property type="match status" value="1"/>
</dbReference>
<dbReference type="PANTHER" id="PTHR43546:SF9">
    <property type="entry name" value="L-ASCORBATE-6-PHOSPHATE LACTONASE ULAG-RELATED"/>
    <property type="match status" value="1"/>
</dbReference>
<dbReference type="PANTHER" id="PTHR43546">
    <property type="entry name" value="UPF0173 METAL-DEPENDENT HYDROLASE MJ1163-RELATED"/>
    <property type="match status" value="1"/>
</dbReference>
<dbReference type="Pfam" id="PF12706">
    <property type="entry name" value="Lactamase_B_2"/>
    <property type="match status" value="1"/>
</dbReference>
<dbReference type="SUPFAM" id="SSF56281">
    <property type="entry name" value="Metallo-hydrolase/oxidoreductase"/>
    <property type="match status" value="1"/>
</dbReference>
<evidence type="ECO:0000255" key="1">
    <source>
        <dbReference type="HAMAP-Rule" id="MF_01266"/>
    </source>
</evidence>
<evidence type="ECO:0000305" key="2"/>
<reference key="1">
    <citation type="journal article" date="2005" name="Nucleic Acids Res.">
        <title>The genome sequence of Salmonella enterica serovar Choleraesuis, a highly invasive and resistant zoonotic pathogen.</title>
        <authorList>
            <person name="Chiu C.-H."/>
            <person name="Tang P."/>
            <person name="Chu C."/>
            <person name="Hu S."/>
            <person name="Bao Q."/>
            <person name="Yu J."/>
            <person name="Chou Y.-Y."/>
            <person name="Wang H.-S."/>
            <person name="Lee Y.-S."/>
        </authorList>
    </citation>
    <scope>NUCLEOTIDE SEQUENCE [LARGE SCALE GENOMIC DNA]</scope>
    <source>
        <strain>SC-B67</strain>
    </source>
</reference>
<name>ULAG_SALCH</name>
<organism>
    <name type="scientific">Salmonella choleraesuis (strain SC-B67)</name>
    <dbReference type="NCBI Taxonomy" id="321314"/>
    <lineage>
        <taxon>Bacteria</taxon>
        <taxon>Pseudomonadati</taxon>
        <taxon>Pseudomonadota</taxon>
        <taxon>Gammaproteobacteria</taxon>
        <taxon>Enterobacterales</taxon>
        <taxon>Enterobacteriaceae</taxon>
        <taxon>Salmonella</taxon>
    </lineage>
</organism>
<feature type="chain" id="PRO_0000231485" description="Probable L-ascorbate-6-phosphate lactonase UlaG">
    <location>
        <begin position="1"/>
        <end position="354"/>
    </location>
</feature>
<accession>Q57GK0</accession>
<comment type="function">
    <text evidence="1">Probably catalyzes the hydrolysis of L-ascorbate-6-P into 3-keto-L-gulonate-6-P. Is essential for L-ascorbate utilization under anaerobic conditions.</text>
</comment>
<comment type="catalytic activity">
    <reaction evidence="1">
        <text>L-ascorbate 6-phosphate + H2O = 3-dehydro-L-gulonate 6-phosphate</text>
        <dbReference type="Rhea" id="RHEA:28803"/>
        <dbReference type="ChEBI" id="CHEBI:15377"/>
        <dbReference type="ChEBI" id="CHEBI:58774"/>
        <dbReference type="ChEBI" id="CHEBI:61698"/>
    </reaction>
</comment>
<comment type="cofactor">
    <cofactor evidence="1">
        <name>a divalent metal cation</name>
        <dbReference type="ChEBI" id="CHEBI:60240"/>
    </cofactor>
</comment>
<comment type="pathway">
    <text evidence="1">Cofactor degradation; L-ascorbate degradation; D-xylulose 5-phosphate from L-ascorbate: step 1/4.</text>
</comment>
<comment type="subcellular location">
    <subcellularLocation>
        <location evidence="1">Cytoplasm</location>
    </subcellularLocation>
</comment>
<comment type="induction">
    <text evidence="1">Induced by L-ascorbate. Repressed by UlaR.</text>
</comment>
<comment type="similarity">
    <text evidence="1">Belongs to the UlaG family.</text>
</comment>
<comment type="sequence caution" evidence="2">
    <conflict type="erroneous initiation">
        <sequence resource="EMBL-CDS" id="AAX68162"/>
    </conflict>
</comment>
<gene>
    <name evidence="1" type="primary">ulaG</name>
    <name type="ordered locus">SCH_4256</name>
</gene>
<protein>
    <recommendedName>
        <fullName evidence="1">Probable L-ascorbate-6-phosphate lactonase UlaG</fullName>
        <ecNumber evidence="1">3.1.1.-</ecNumber>
    </recommendedName>
    <alternativeName>
        <fullName evidence="1">L-ascorbate utilization protein G</fullName>
    </alternativeName>
</protein>
<sequence length="354" mass="40087">MSKVQSITRESWILSTFPEWGSWLNEEIEQEQVAPGTFAMWWLGCTGIWLKSEGGTNVCVDFWCGTGKQSHGNPLMKTGHQMQRMAGVKKLQPNLRTTPFVLDPFAIRQIDAVLATHDHNDHIDVNVAAAVMQNCADDVPFIGPQTCVDLWVGWGVPKERCIVVKPGDVVKVKDIEIHALDAFDRTALITLPADQKAAGVLPEGMDVRAVNYLFKTPGGNLYHSGDSHYSNYYAKHGNEHQIDVALGSYGENPRGITDKMTSADILRMAESLNTKVVIPFHHDIWSNFQADPQEIRVLWEMKKDRLKYGFKPFIWQVGGKFTWPLDKDNFEYHYPRGFDDCFTIEPDLPFKSFL</sequence>
<keyword id="KW-0963">Cytoplasm</keyword>
<keyword id="KW-0378">Hydrolase</keyword>